<protein>
    <recommendedName>
        <fullName evidence="1">Segregation and condensation protein B</fullName>
    </recommendedName>
</protein>
<accession>C1FNZ8</accession>
<organism>
    <name type="scientific">Clostridium botulinum (strain Kyoto / Type A2)</name>
    <dbReference type="NCBI Taxonomy" id="536232"/>
    <lineage>
        <taxon>Bacteria</taxon>
        <taxon>Bacillati</taxon>
        <taxon>Bacillota</taxon>
        <taxon>Clostridia</taxon>
        <taxon>Eubacteriales</taxon>
        <taxon>Clostridiaceae</taxon>
        <taxon>Clostridium</taxon>
    </lineage>
</organism>
<comment type="function">
    <text evidence="1">Participates in chromosomal partition during cell division. May act via the formation of a condensin-like complex containing Smc and ScpA that pull DNA away from mid-cell into both cell halves.</text>
</comment>
<comment type="subunit">
    <text evidence="1">Homodimer. Homodimerization may be required to stabilize the binding of ScpA to the Smc head domains. Component of a cohesin-like complex composed of ScpA, ScpB and the Smc homodimer, in which ScpA and ScpB bind to the head domain of Smc. The presence of the three proteins is required for the association of the complex with DNA.</text>
</comment>
<comment type="subcellular location">
    <subcellularLocation>
        <location evidence="1">Cytoplasm</location>
    </subcellularLocation>
    <text evidence="1">Associated with two foci at the outer edges of the nucleoid region in young cells, and at four foci within both cell halves in older cells.</text>
</comment>
<comment type="similarity">
    <text evidence="1">Belongs to the ScpB family.</text>
</comment>
<evidence type="ECO:0000255" key="1">
    <source>
        <dbReference type="HAMAP-Rule" id="MF_01804"/>
    </source>
</evidence>
<feature type="chain" id="PRO_1000187533" description="Segregation and condensation protein B">
    <location>
        <begin position="1"/>
        <end position="193"/>
    </location>
</feature>
<dbReference type="EMBL" id="CP001581">
    <property type="protein sequence ID" value="ACO84887.1"/>
    <property type="molecule type" value="Genomic_DNA"/>
</dbReference>
<dbReference type="RefSeq" id="WP_003358977.1">
    <property type="nucleotide sequence ID" value="NC_012563.1"/>
</dbReference>
<dbReference type="SMR" id="C1FNZ8"/>
<dbReference type="KEGG" id="cby:CLM_2016"/>
<dbReference type="eggNOG" id="COG1386">
    <property type="taxonomic scope" value="Bacteria"/>
</dbReference>
<dbReference type="HOGENOM" id="CLU_045647_5_3_9"/>
<dbReference type="Proteomes" id="UP000001374">
    <property type="component" value="Chromosome"/>
</dbReference>
<dbReference type="GO" id="GO:0005737">
    <property type="term" value="C:cytoplasm"/>
    <property type="evidence" value="ECO:0007669"/>
    <property type="project" value="UniProtKB-SubCell"/>
</dbReference>
<dbReference type="GO" id="GO:0051301">
    <property type="term" value="P:cell division"/>
    <property type="evidence" value="ECO:0007669"/>
    <property type="project" value="UniProtKB-KW"/>
</dbReference>
<dbReference type="GO" id="GO:0051304">
    <property type="term" value="P:chromosome separation"/>
    <property type="evidence" value="ECO:0007669"/>
    <property type="project" value="InterPro"/>
</dbReference>
<dbReference type="GO" id="GO:0006260">
    <property type="term" value="P:DNA replication"/>
    <property type="evidence" value="ECO:0007669"/>
    <property type="project" value="UniProtKB-UniRule"/>
</dbReference>
<dbReference type="Gene3D" id="1.10.10.10">
    <property type="entry name" value="Winged helix-like DNA-binding domain superfamily/Winged helix DNA-binding domain"/>
    <property type="match status" value="2"/>
</dbReference>
<dbReference type="HAMAP" id="MF_01804">
    <property type="entry name" value="ScpB"/>
    <property type="match status" value="1"/>
</dbReference>
<dbReference type="InterPro" id="IPR005234">
    <property type="entry name" value="ScpB_csome_segregation"/>
</dbReference>
<dbReference type="InterPro" id="IPR036388">
    <property type="entry name" value="WH-like_DNA-bd_sf"/>
</dbReference>
<dbReference type="InterPro" id="IPR036390">
    <property type="entry name" value="WH_DNA-bd_sf"/>
</dbReference>
<dbReference type="NCBIfam" id="TIGR00281">
    <property type="entry name" value="SMC-Scp complex subunit ScpB"/>
    <property type="match status" value="1"/>
</dbReference>
<dbReference type="PANTHER" id="PTHR34298">
    <property type="entry name" value="SEGREGATION AND CONDENSATION PROTEIN B"/>
    <property type="match status" value="1"/>
</dbReference>
<dbReference type="PANTHER" id="PTHR34298:SF2">
    <property type="entry name" value="SEGREGATION AND CONDENSATION PROTEIN B"/>
    <property type="match status" value="1"/>
</dbReference>
<dbReference type="Pfam" id="PF04079">
    <property type="entry name" value="SMC_ScpB"/>
    <property type="match status" value="1"/>
</dbReference>
<dbReference type="PIRSF" id="PIRSF019345">
    <property type="entry name" value="ScpB"/>
    <property type="match status" value="1"/>
</dbReference>
<dbReference type="SUPFAM" id="SSF46785">
    <property type="entry name" value="Winged helix' DNA-binding domain"/>
    <property type="match status" value="2"/>
</dbReference>
<reference key="1">
    <citation type="submission" date="2008-10" db="EMBL/GenBank/DDBJ databases">
        <title>Genome sequence of Clostridium botulinum A2 Kyoto.</title>
        <authorList>
            <person name="Shrivastava S."/>
            <person name="Brinkac L.M."/>
            <person name="Brown J.L."/>
            <person name="Bruce D."/>
            <person name="Detter C.C."/>
            <person name="Johnson E.A."/>
            <person name="Munk C.A."/>
            <person name="Smith L.A."/>
            <person name="Smith T.J."/>
            <person name="Sutton G."/>
            <person name="Brettin T.S."/>
        </authorList>
    </citation>
    <scope>NUCLEOTIDE SEQUENCE [LARGE SCALE GENOMIC DNA]</scope>
    <source>
        <strain>Kyoto / Type A2</strain>
    </source>
</reference>
<gene>
    <name evidence="1" type="primary">scpB</name>
    <name type="ordered locus">CLM_2016</name>
</gene>
<name>SCPB_CLOBJ</name>
<keyword id="KW-0131">Cell cycle</keyword>
<keyword id="KW-0132">Cell division</keyword>
<keyword id="KW-0159">Chromosome partition</keyword>
<keyword id="KW-0963">Cytoplasm</keyword>
<sequence length="193" mass="22010">MNKDHEEQLEINEVSQKNKYKSIIESLLFMSGEPINIKDLATILNCKQDKVSSLLNEMKNSYVGKDRGIKILIHNRAVQLVTKPENSIYVEKLLKTNIRQSLSQAALETLSIIAYKQPITRVAIDEIRGVKSDRAIYTLLEKNIIKECGRLDVPGKPILYGTTEEFLKFFGLDSIEAIPNLEDLLKEFSKEEN</sequence>
<proteinExistence type="inferred from homology"/>